<dbReference type="EC" id="2.1.1.33" evidence="2"/>
<dbReference type="EMBL" id="AE004439">
    <property type="protein sequence ID" value="AAK03401.1"/>
    <property type="molecule type" value="Genomic_DNA"/>
</dbReference>
<dbReference type="RefSeq" id="WP_005717804.1">
    <property type="nucleotide sequence ID" value="NC_002663.1"/>
</dbReference>
<dbReference type="SMR" id="Q9CLC2"/>
<dbReference type="STRING" id="272843.PM1317"/>
<dbReference type="EnsemblBacteria" id="AAK03401">
    <property type="protein sequence ID" value="AAK03401"/>
    <property type="gene ID" value="PM1317"/>
</dbReference>
<dbReference type="KEGG" id="pmu:PM1317"/>
<dbReference type="HOGENOM" id="CLU_050910_0_1_6"/>
<dbReference type="OrthoDB" id="9802090at2"/>
<dbReference type="UniPathway" id="UPA00989"/>
<dbReference type="Proteomes" id="UP000000809">
    <property type="component" value="Chromosome"/>
</dbReference>
<dbReference type="GO" id="GO:0043527">
    <property type="term" value="C:tRNA methyltransferase complex"/>
    <property type="evidence" value="ECO:0007669"/>
    <property type="project" value="TreeGrafter"/>
</dbReference>
<dbReference type="GO" id="GO:0008176">
    <property type="term" value="F:tRNA (guanine(46)-N7)-methyltransferase activity"/>
    <property type="evidence" value="ECO:0007669"/>
    <property type="project" value="UniProtKB-UniRule"/>
</dbReference>
<dbReference type="FunFam" id="3.40.50.150:FF:000035">
    <property type="entry name" value="tRNA (guanine-N(7)-)-methyltransferase"/>
    <property type="match status" value="1"/>
</dbReference>
<dbReference type="Gene3D" id="3.40.50.150">
    <property type="entry name" value="Vaccinia Virus protein VP39"/>
    <property type="match status" value="1"/>
</dbReference>
<dbReference type="HAMAP" id="MF_01057">
    <property type="entry name" value="tRNA_methyltr_TrmB"/>
    <property type="match status" value="1"/>
</dbReference>
<dbReference type="InterPro" id="IPR029063">
    <property type="entry name" value="SAM-dependent_MTases_sf"/>
</dbReference>
<dbReference type="InterPro" id="IPR003358">
    <property type="entry name" value="tRNA_(Gua-N-7)_MeTrfase_Trmb"/>
</dbReference>
<dbReference type="InterPro" id="IPR055361">
    <property type="entry name" value="tRNA_methyltr_TrmB_bact"/>
</dbReference>
<dbReference type="NCBIfam" id="TIGR00091">
    <property type="entry name" value="tRNA (guanosine(46)-N7)-methyltransferase TrmB"/>
    <property type="match status" value="1"/>
</dbReference>
<dbReference type="PANTHER" id="PTHR23417">
    <property type="entry name" value="3-DEOXY-D-MANNO-OCTULOSONIC-ACID TRANSFERASE/TRNA GUANINE-N 7 - -METHYLTRANSFERASE"/>
    <property type="match status" value="1"/>
</dbReference>
<dbReference type="PANTHER" id="PTHR23417:SF14">
    <property type="entry name" value="PENTACOTRIPEPTIDE-REPEAT REGION OF PRORP DOMAIN-CONTAINING PROTEIN"/>
    <property type="match status" value="1"/>
</dbReference>
<dbReference type="Pfam" id="PF02390">
    <property type="entry name" value="Methyltransf_4"/>
    <property type="match status" value="1"/>
</dbReference>
<dbReference type="SUPFAM" id="SSF53335">
    <property type="entry name" value="S-adenosyl-L-methionine-dependent methyltransferases"/>
    <property type="match status" value="1"/>
</dbReference>
<dbReference type="PROSITE" id="PS51625">
    <property type="entry name" value="SAM_MT_TRMB"/>
    <property type="match status" value="1"/>
</dbReference>
<proteinExistence type="inferred from homology"/>
<organism>
    <name type="scientific">Pasteurella multocida (strain Pm70)</name>
    <dbReference type="NCBI Taxonomy" id="272843"/>
    <lineage>
        <taxon>Bacteria</taxon>
        <taxon>Pseudomonadati</taxon>
        <taxon>Pseudomonadota</taxon>
        <taxon>Gammaproteobacteria</taxon>
        <taxon>Pasteurellales</taxon>
        <taxon>Pasteurellaceae</taxon>
        <taxon>Pasteurella</taxon>
    </lineage>
</organism>
<keyword id="KW-0489">Methyltransferase</keyword>
<keyword id="KW-1185">Reference proteome</keyword>
<keyword id="KW-0949">S-adenosyl-L-methionine</keyword>
<keyword id="KW-0808">Transferase</keyword>
<keyword id="KW-0819">tRNA processing</keyword>
<name>TRMB_PASMU</name>
<sequence length="255" mass="29319">MSFNNQESENLPTFADQKRKTVEVAEFTAEGRYKRKVRSFVLRTGRLSEFQKNAMNQHWGFYGLEHQNQPFDFPAIYGNNNPVVLEIGFGMGHSLVDMALQNPERNYLGIEVHTPGVGACIAYAVEKGVKNLRIICHDATEILRDCIADHSLGGLQLFFPDPWHKAKHHKRRIVQPQFVNTITQKLTTGGFIHMATDWENYAEHMLAVLQQAEGLQNTSATHDYIPRPDFRPLTKFEQRGHRLGHGVWDLYYIKK</sequence>
<protein>
    <recommendedName>
        <fullName evidence="2">tRNA (guanine-N(7)-)-methyltransferase</fullName>
        <ecNumber evidence="2">2.1.1.33</ecNumber>
    </recommendedName>
    <alternativeName>
        <fullName evidence="2">tRNA (guanine(46)-N(7))-methyltransferase</fullName>
    </alternativeName>
    <alternativeName>
        <fullName evidence="2">tRNA(m7G46)-methyltransferase</fullName>
    </alternativeName>
</protein>
<evidence type="ECO:0000250" key="1"/>
<evidence type="ECO:0000255" key="2">
    <source>
        <dbReference type="HAMAP-Rule" id="MF_01057"/>
    </source>
</evidence>
<comment type="function">
    <text evidence="2">Catalyzes the formation of N(7)-methylguanine at position 46 (m7G46) in tRNA.</text>
</comment>
<comment type="catalytic activity">
    <reaction evidence="2">
        <text>guanosine(46) in tRNA + S-adenosyl-L-methionine = N(7)-methylguanosine(46) in tRNA + S-adenosyl-L-homocysteine</text>
        <dbReference type="Rhea" id="RHEA:42708"/>
        <dbReference type="Rhea" id="RHEA-COMP:10188"/>
        <dbReference type="Rhea" id="RHEA-COMP:10189"/>
        <dbReference type="ChEBI" id="CHEBI:57856"/>
        <dbReference type="ChEBI" id="CHEBI:59789"/>
        <dbReference type="ChEBI" id="CHEBI:74269"/>
        <dbReference type="ChEBI" id="CHEBI:74480"/>
        <dbReference type="EC" id="2.1.1.33"/>
    </reaction>
</comment>
<comment type="pathway">
    <text evidence="2">tRNA modification; N(7)-methylguanine-tRNA biosynthesis.</text>
</comment>
<comment type="similarity">
    <text evidence="2">Belongs to the class I-like SAM-binding methyltransferase superfamily. TrmB family.</text>
</comment>
<feature type="chain" id="PRO_0000171368" description="tRNA (guanine-N(7)-)-methyltransferase">
    <location>
        <begin position="1"/>
        <end position="255"/>
    </location>
</feature>
<feature type="active site" evidence="1">
    <location>
        <position position="161"/>
    </location>
</feature>
<feature type="binding site" evidence="2">
    <location>
        <position position="86"/>
    </location>
    <ligand>
        <name>S-adenosyl-L-methionine</name>
        <dbReference type="ChEBI" id="CHEBI:59789"/>
    </ligand>
</feature>
<feature type="binding site" evidence="2">
    <location>
        <position position="111"/>
    </location>
    <ligand>
        <name>S-adenosyl-L-methionine</name>
        <dbReference type="ChEBI" id="CHEBI:59789"/>
    </ligand>
</feature>
<feature type="binding site" evidence="2">
    <location>
        <position position="138"/>
    </location>
    <ligand>
        <name>S-adenosyl-L-methionine</name>
        <dbReference type="ChEBI" id="CHEBI:59789"/>
    </ligand>
</feature>
<feature type="binding site" evidence="2">
    <location>
        <position position="161"/>
    </location>
    <ligand>
        <name>S-adenosyl-L-methionine</name>
        <dbReference type="ChEBI" id="CHEBI:59789"/>
    </ligand>
</feature>
<feature type="binding site" evidence="2">
    <location>
        <position position="165"/>
    </location>
    <ligand>
        <name>substrate</name>
    </ligand>
</feature>
<feature type="binding site" evidence="2">
    <location>
        <position position="197"/>
    </location>
    <ligand>
        <name>substrate</name>
    </ligand>
</feature>
<feature type="binding site" evidence="2">
    <location>
        <begin position="234"/>
        <end position="237"/>
    </location>
    <ligand>
        <name>substrate</name>
    </ligand>
</feature>
<gene>
    <name evidence="2" type="primary">trmB</name>
    <name type="ordered locus">PM1317</name>
</gene>
<accession>Q9CLC2</accession>
<reference key="1">
    <citation type="journal article" date="2001" name="Proc. Natl. Acad. Sci. U.S.A.">
        <title>Complete genomic sequence of Pasteurella multocida Pm70.</title>
        <authorList>
            <person name="May B.J."/>
            <person name="Zhang Q."/>
            <person name="Li L.L."/>
            <person name="Paustian M.L."/>
            <person name="Whittam T.S."/>
            <person name="Kapur V."/>
        </authorList>
    </citation>
    <scope>NUCLEOTIDE SEQUENCE [LARGE SCALE GENOMIC DNA]</scope>
    <source>
        <strain>Pm70</strain>
    </source>
</reference>